<accession>C8ZFZ7</accession>
<gene>
    <name type="primary">LAP3</name>
    <name type="synonym">BLH1</name>
    <name type="synonym">GAL6</name>
    <name type="synonym">YCP1</name>
    <name type="ORF">EC1118_1N9_1035g</name>
</gene>
<comment type="function">
    <text evidence="1">The normal physiological role of the enzyme is unknown, but it is not essential for the viability of yeast cells. Has aminopeptidase activity, shortening substrate peptides sequentially by 1 amino acid. Has bleomycin hydrolase activity, which can protect the cell from the toxic effects of bleomycin. Has homocysteine-thiolactonase activity, protecting the cell against homocysteine toxicity. Acts as a repressor in the GAL4 regulatory system, but this does not require either the peptidase or nucleic acid-binding activities (By similarity).</text>
</comment>
<comment type="catalytic activity">
    <reaction>
        <text>Inactivates bleomycin B2 (a cytotoxic glycometallopeptide) by hydrolysis of a carboxyamide bond of beta-aminoalanine, but also shows general aminopeptidase activity. The specificity varies somewhat with source, but amino acid arylamides of Met, Leu and Ala are preferred.</text>
        <dbReference type="EC" id="3.4.22.40"/>
    </reaction>
</comment>
<comment type="activity regulation">
    <text evidence="1">Inhibited by E64, a specific inhibitor of cysteine proteases, N-ethylmaleimide, iodacetamide, and mercury and zinc ions.</text>
</comment>
<comment type="subunit">
    <text evidence="1">Homohexamer. Binds to nucleic acids. Binds single-stranded DNA and RNA with higher affinity than double-stranded DNA (By similarity).</text>
</comment>
<comment type="subcellular location">
    <subcellularLocation>
        <location evidence="1">Mitochondrion</location>
    </subcellularLocation>
    <subcellularLocation>
        <location evidence="1">Cytoplasm</location>
    </subcellularLocation>
</comment>
<comment type="alternative products">
    <event type="alternative initiation"/>
    <isoform>
        <id>C8ZFZ7-1</id>
        <name>Mitochondrial</name>
        <sequence type="displayed"/>
    </isoform>
    <isoform>
        <id>C8ZFZ7-2</id>
        <name>Cytoplasmic</name>
        <sequence type="described" ref="VSP_038915"/>
    </isoform>
</comment>
<comment type="PTM">
    <text evidence="1">The N-terminus of isoform Cytoplasmic is blocked.</text>
</comment>
<comment type="similarity">
    <text evidence="3 4">Belongs to the peptidase C1 family.</text>
</comment>
<comment type="sequence caution" evidence="5">
    <conflict type="erroneous initiation">
        <sequence resource="EMBL-CDS" id="CAY82370"/>
    </conflict>
</comment>
<proteinExistence type="inferred from homology"/>
<dbReference type="EC" id="3.4.22.40"/>
<dbReference type="EMBL" id="FN393086">
    <property type="protein sequence ID" value="CAY82370.1"/>
    <property type="status" value="ALT_INIT"/>
    <property type="molecule type" value="Genomic_DNA"/>
</dbReference>
<dbReference type="SMR" id="C8ZFZ7"/>
<dbReference type="MEROPS" id="C01.085"/>
<dbReference type="HOGENOM" id="CLU_038600_0_1_1"/>
<dbReference type="OrthoDB" id="16121at4893"/>
<dbReference type="Proteomes" id="UP000000286">
    <property type="component" value="Chromosome XIV, Scaffold EC1118_1N9"/>
</dbReference>
<dbReference type="GO" id="GO:0005739">
    <property type="term" value="C:mitochondrion"/>
    <property type="evidence" value="ECO:0007669"/>
    <property type="project" value="UniProtKB-SubCell"/>
</dbReference>
<dbReference type="GO" id="GO:0070005">
    <property type="term" value="F:cysteine-type aminopeptidase activity"/>
    <property type="evidence" value="ECO:0007669"/>
    <property type="project" value="InterPro"/>
</dbReference>
<dbReference type="GO" id="GO:0004197">
    <property type="term" value="F:cysteine-type endopeptidase activity"/>
    <property type="evidence" value="ECO:0007669"/>
    <property type="project" value="UniProtKB-EC"/>
</dbReference>
<dbReference type="GO" id="GO:0003677">
    <property type="term" value="F:DNA binding"/>
    <property type="evidence" value="ECO:0007669"/>
    <property type="project" value="UniProtKB-KW"/>
</dbReference>
<dbReference type="GO" id="GO:0043418">
    <property type="term" value="P:homocysteine catabolic process"/>
    <property type="evidence" value="ECO:0007669"/>
    <property type="project" value="TreeGrafter"/>
</dbReference>
<dbReference type="GO" id="GO:0006508">
    <property type="term" value="P:proteolysis"/>
    <property type="evidence" value="ECO:0007669"/>
    <property type="project" value="UniProtKB-KW"/>
</dbReference>
<dbReference type="GO" id="GO:0009636">
    <property type="term" value="P:response to toxic substance"/>
    <property type="evidence" value="ECO:0007669"/>
    <property type="project" value="TreeGrafter"/>
</dbReference>
<dbReference type="CDD" id="cd00585">
    <property type="entry name" value="Peptidase_C1B"/>
    <property type="match status" value="1"/>
</dbReference>
<dbReference type="FunFam" id="3.90.70.10:FF:000091">
    <property type="entry name" value="Aminopeptidase C"/>
    <property type="match status" value="1"/>
</dbReference>
<dbReference type="Gene3D" id="3.90.70.10">
    <property type="entry name" value="Cysteine proteinases"/>
    <property type="match status" value="1"/>
</dbReference>
<dbReference type="InterPro" id="IPR038765">
    <property type="entry name" value="Papain-like_cys_pep_sf"/>
</dbReference>
<dbReference type="InterPro" id="IPR000169">
    <property type="entry name" value="Pept_cys_AS"/>
</dbReference>
<dbReference type="InterPro" id="IPR025660">
    <property type="entry name" value="Pept_his_AS"/>
</dbReference>
<dbReference type="InterPro" id="IPR004134">
    <property type="entry name" value="Peptidase_C1B"/>
</dbReference>
<dbReference type="PANTHER" id="PTHR10363">
    <property type="entry name" value="BLEOMYCIN HYDROLASE"/>
    <property type="match status" value="1"/>
</dbReference>
<dbReference type="PANTHER" id="PTHR10363:SF2">
    <property type="entry name" value="BLEOMYCIN HYDROLASE"/>
    <property type="match status" value="1"/>
</dbReference>
<dbReference type="Pfam" id="PF03051">
    <property type="entry name" value="Peptidase_C1_2"/>
    <property type="match status" value="1"/>
</dbReference>
<dbReference type="PIRSF" id="PIRSF005700">
    <property type="entry name" value="PepC"/>
    <property type="match status" value="1"/>
</dbReference>
<dbReference type="SUPFAM" id="SSF54001">
    <property type="entry name" value="Cysteine proteinases"/>
    <property type="match status" value="1"/>
</dbReference>
<dbReference type="PROSITE" id="PS00139">
    <property type="entry name" value="THIOL_PROTEASE_CYS"/>
    <property type="match status" value="1"/>
</dbReference>
<dbReference type="PROSITE" id="PS00639">
    <property type="entry name" value="THIOL_PROTEASE_HIS"/>
    <property type="match status" value="1"/>
</dbReference>
<organism>
    <name type="scientific">Saccharomyces cerevisiae (strain Lalvin EC1118 / Prise de mousse)</name>
    <name type="common">Baker's yeast</name>
    <dbReference type="NCBI Taxonomy" id="643680"/>
    <lineage>
        <taxon>Eukaryota</taxon>
        <taxon>Fungi</taxon>
        <taxon>Dikarya</taxon>
        <taxon>Ascomycota</taxon>
        <taxon>Saccharomycotina</taxon>
        <taxon>Saccharomycetes</taxon>
        <taxon>Saccharomycetales</taxon>
        <taxon>Saccharomycetaceae</taxon>
        <taxon>Saccharomyces</taxon>
    </lineage>
</organism>
<name>BLH1_YEAS8</name>
<feature type="transit peptide" description="Mitochondrion" evidence="2">
    <location>
        <begin position="1"/>
        <end position="30"/>
    </location>
</feature>
<feature type="chain" id="PRO_0000393308" description="Cysteine proteinase 1, mitochondrial">
    <location>
        <begin position="31"/>
        <end position="482"/>
    </location>
</feature>
<feature type="propeptide" id="PRO_0000393309" description="Removed in mature form; by autocatalysis" evidence="1">
    <location>
        <position position="483"/>
    </location>
</feature>
<feature type="active site" evidence="1">
    <location>
        <position position="102"/>
    </location>
</feature>
<feature type="active site" evidence="1">
    <location>
        <position position="398"/>
    </location>
</feature>
<feature type="active site" evidence="1">
    <location>
        <position position="421"/>
    </location>
</feature>
<feature type="splice variant" id="VSP_038915" description="In isoform Cytoplasmic." evidence="5">
    <location>
        <begin position="1"/>
        <end position="29"/>
    </location>
</feature>
<evidence type="ECO:0000250" key="1"/>
<evidence type="ECO:0000255" key="2"/>
<evidence type="ECO:0000255" key="3">
    <source>
        <dbReference type="PROSITE-ProRule" id="PRU10088"/>
    </source>
</evidence>
<evidence type="ECO:0000255" key="4">
    <source>
        <dbReference type="PROSITE-ProRule" id="PRU10089"/>
    </source>
</evidence>
<evidence type="ECO:0000305" key="5"/>
<protein>
    <recommendedName>
        <fullName>Cysteine proteinase 1, mitochondrial</fullName>
        <ecNumber>3.4.22.40</ecNumber>
    </recommendedName>
    <alternativeName>
        <fullName>Bleomycin hydrolase</fullName>
        <shortName>BLM hydrolase</shortName>
    </alternativeName>
    <alternativeName>
        <fullName>Homocysteine-thiolactonase</fullName>
        <shortName>HTLase</shortName>
        <shortName>Hcy-thiolactonase</shortName>
    </alternativeName>
    <alternativeName>
        <fullName>Leucine aminopeptidase 3</fullName>
    </alternativeName>
    <alternativeName>
        <fullName>Y3</fullName>
    </alternativeName>
</protein>
<sequence>MLPTSVSRSLYLKTFRSHLLRAPQIVLKRMSSSIDISKINSWNKEFQSDLTHQLATTVLKNYNADDALLNKTRLQKQDNRVFNTVVSTDSTPVTNQKSSGRCWLFAATNQLRLNVLSELNLKEFELSQAYLFFYDKLEKANYFLDQIVSSADQDIDSRLVQYLLAAPTEDGGQYSMFLNLVKKYGLIPKDLYGDLPYSTTASRKWNSLLTTKLREFAETLRTALKERSADDSIIVTLREQMQREIFRLMSLFMDIPPVQPNEQFTWEYVDKDKKIHTIKSTPLEFASKYAKLDPSTPVSLINDPRHPYGKLIKIDRLGNVLGGDAVIYLNVDNETLSKLVVKRLQNNKAVFFGSHTPKFMDKKTGVMDIELWNYPAIGYNLPQQKASRIRYHESLMTHAMLITGCHVDETSKLPLRYRVENSWGKDSGKDGLYVMTQKYFEEYCFQIVVDINELPKELASKFTSGKEEPIVLPIWDPMGALAK</sequence>
<keyword id="KW-0024">Alternative initiation</keyword>
<keyword id="KW-0963">Cytoplasm</keyword>
<keyword id="KW-0238">DNA-binding</keyword>
<keyword id="KW-0378">Hydrolase</keyword>
<keyword id="KW-0496">Mitochondrion</keyword>
<keyword id="KW-0645">Protease</keyword>
<keyword id="KW-0788">Thiol protease</keyword>
<keyword id="KW-0809">Transit peptide</keyword>
<reference key="1">
    <citation type="journal article" date="2009" name="Proc. Natl. Acad. Sci. U.S.A.">
        <title>Eukaryote-to-eukaryote gene transfer events revealed by the genome sequence of the wine yeast Saccharomyces cerevisiae EC1118.</title>
        <authorList>
            <person name="Novo M."/>
            <person name="Bigey F."/>
            <person name="Beyne E."/>
            <person name="Galeote V."/>
            <person name="Gavory F."/>
            <person name="Mallet S."/>
            <person name="Cambon B."/>
            <person name="Legras J.-L."/>
            <person name="Wincker P."/>
            <person name="Casaregola S."/>
            <person name="Dequin S."/>
        </authorList>
    </citation>
    <scope>NUCLEOTIDE SEQUENCE [LARGE SCALE GENOMIC DNA]</scope>
    <source>
        <strain>Lalvin EC1118 / Prise de mousse</strain>
    </source>
</reference>